<reference key="1">
    <citation type="journal article" date="2007" name="Genome Biol.">
        <title>Comparison of Francisella tularensis genomes reveals evolutionary events associated with the emergence of human pathogenic strains.</title>
        <authorList>
            <person name="Rohmer L."/>
            <person name="Fong C."/>
            <person name="Abmayr S."/>
            <person name="Wasnick M."/>
            <person name="Larson Freeman T.J."/>
            <person name="Radey M."/>
            <person name="Guina T."/>
            <person name="Svensson K."/>
            <person name="Hayden H.S."/>
            <person name="Jacobs M."/>
            <person name="Gallagher L.A."/>
            <person name="Manoil C."/>
            <person name="Ernst R.K."/>
            <person name="Drees B."/>
            <person name="Buckley D."/>
            <person name="Haugen E."/>
            <person name="Bovee D."/>
            <person name="Zhou Y."/>
            <person name="Chang J."/>
            <person name="Levy R."/>
            <person name="Lim R."/>
            <person name="Gillett W."/>
            <person name="Guenthener D."/>
            <person name="Kang A."/>
            <person name="Shaffer S.A."/>
            <person name="Taylor G."/>
            <person name="Chen J."/>
            <person name="Gallis B."/>
            <person name="D'Argenio D.A."/>
            <person name="Forsman M."/>
            <person name="Olson M.V."/>
            <person name="Goodlett D.R."/>
            <person name="Kaul R."/>
            <person name="Miller S.I."/>
            <person name="Brittnacher M.J."/>
        </authorList>
    </citation>
    <scope>NUCLEOTIDE SEQUENCE [LARGE SCALE GENOMIC DNA]</scope>
    <source>
        <strain>U112</strain>
    </source>
</reference>
<name>ALR_FRATN</name>
<dbReference type="EC" id="5.1.1.1" evidence="1"/>
<dbReference type="EMBL" id="CP000439">
    <property type="protein sequence ID" value="ABK89637.1"/>
    <property type="molecule type" value="Genomic_DNA"/>
</dbReference>
<dbReference type="RefSeq" id="WP_003038932.1">
    <property type="nucleotide sequence ID" value="NC_008601.1"/>
</dbReference>
<dbReference type="SMR" id="A0Q5X2"/>
<dbReference type="KEGG" id="ftn:FTN_0746"/>
<dbReference type="KEGG" id="ftx:AW25_1275"/>
<dbReference type="BioCyc" id="FTUL401614:G1G75-778-MONOMER"/>
<dbReference type="UniPathway" id="UPA00042">
    <property type="reaction ID" value="UER00497"/>
</dbReference>
<dbReference type="Proteomes" id="UP000000762">
    <property type="component" value="Chromosome"/>
</dbReference>
<dbReference type="GO" id="GO:0005829">
    <property type="term" value="C:cytosol"/>
    <property type="evidence" value="ECO:0007669"/>
    <property type="project" value="TreeGrafter"/>
</dbReference>
<dbReference type="GO" id="GO:0008784">
    <property type="term" value="F:alanine racemase activity"/>
    <property type="evidence" value="ECO:0007669"/>
    <property type="project" value="UniProtKB-UniRule"/>
</dbReference>
<dbReference type="GO" id="GO:0030170">
    <property type="term" value="F:pyridoxal phosphate binding"/>
    <property type="evidence" value="ECO:0007669"/>
    <property type="project" value="UniProtKB-UniRule"/>
</dbReference>
<dbReference type="GO" id="GO:0030632">
    <property type="term" value="P:D-alanine biosynthetic process"/>
    <property type="evidence" value="ECO:0007669"/>
    <property type="project" value="UniProtKB-UniRule"/>
</dbReference>
<dbReference type="CDD" id="cd00430">
    <property type="entry name" value="PLPDE_III_AR"/>
    <property type="match status" value="1"/>
</dbReference>
<dbReference type="Gene3D" id="3.20.20.10">
    <property type="entry name" value="Alanine racemase"/>
    <property type="match status" value="1"/>
</dbReference>
<dbReference type="Gene3D" id="2.40.37.10">
    <property type="entry name" value="Lyase, Ornithine Decarboxylase, Chain A, domain 1"/>
    <property type="match status" value="1"/>
</dbReference>
<dbReference type="HAMAP" id="MF_01201">
    <property type="entry name" value="Ala_racemase"/>
    <property type="match status" value="1"/>
</dbReference>
<dbReference type="InterPro" id="IPR000821">
    <property type="entry name" value="Ala_racemase"/>
</dbReference>
<dbReference type="InterPro" id="IPR009006">
    <property type="entry name" value="Ala_racemase/Decarboxylase_C"/>
</dbReference>
<dbReference type="InterPro" id="IPR011079">
    <property type="entry name" value="Ala_racemase_C"/>
</dbReference>
<dbReference type="InterPro" id="IPR001608">
    <property type="entry name" value="Ala_racemase_N"/>
</dbReference>
<dbReference type="InterPro" id="IPR029066">
    <property type="entry name" value="PLP-binding_barrel"/>
</dbReference>
<dbReference type="NCBIfam" id="TIGR00492">
    <property type="entry name" value="alr"/>
    <property type="match status" value="1"/>
</dbReference>
<dbReference type="PANTHER" id="PTHR30511">
    <property type="entry name" value="ALANINE RACEMASE"/>
    <property type="match status" value="1"/>
</dbReference>
<dbReference type="PANTHER" id="PTHR30511:SF0">
    <property type="entry name" value="ALANINE RACEMASE, CATABOLIC-RELATED"/>
    <property type="match status" value="1"/>
</dbReference>
<dbReference type="Pfam" id="PF00842">
    <property type="entry name" value="Ala_racemase_C"/>
    <property type="match status" value="1"/>
</dbReference>
<dbReference type="Pfam" id="PF01168">
    <property type="entry name" value="Ala_racemase_N"/>
    <property type="match status" value="1"/>
</dbReference>
<dbReference type="PRINTS" id="PR00992">
    <property type="entry name" value="ALARACEMASE"/>
</dbReference>
<dbReference type="SMART" id="SM01005">
    <property type="entry name" value="Ala_racemase_C"/>
    <property type="match status" value="1"/>
</dbReference>
<dbReference type="SUPFAM" id="SSF50621">
    <property type="entry name" value="Alanine racemase C-terminal domain-like"/>
    <property type="match status" value="1"/>
</dbReference>
<dbReference type="SUPFAM" id="SSF51419">
    <property type="entry name" value="PLP-binding barrel"/>
    <property type="match status" value="1"/>
</dbReference>
<gene>
    <name type="primary">alr</name>
    <name type="ordered locus">FTN_0746</name>
</gene>
<protein>
    <recommendedName>
        <fullName evidence="1">Alanine racemase</fullName>
        <ecNumber evidence="1">5.1.1.1</ecNumber>
    </recommendedName>
</protein>
<keyword id="KW-0413">Isomerase</keyword>
<keyword id="KW-0663">Pyridoxal phosphate</keyword>
<proteinExistence type="inferred from homology"/>
<accession>A0Q5X2</accession>
<sequence>MNVLEISAQTLRNNIRIIKEYVGSAKICFPVKANAYGHGLELIVEHSHDLVDFFAVANVLEAFRVLDVVEKPVMIFGVIEYNYIDRILSKNIRVSIQDYNDIEKLEKFAKYYNKKPFVHVNLNTGMNRMGVDYNDACRTIQRAYESDWLILEGVYSHLACADNRDHPTNIKQKNRFDSIVEFTKGLSQDIICHLSNSYGFLGQKGICYDMVRPGILSYGFLPEFYVDRVIREIKPIARLLSKVVKIITLQEGEGVGYSLIYRGFEGEQLAVIPIGYGDGFPRELGDRGFVNINDVMYPMAGRMSMDGLTVSLGINEYDVKVSDTVELISAIPRNRNSAFSIAKQTNTIEYDIMSTLNDRIIRKII</sequence>
<comment type="function">
    <text evidence="1">Catalyzes the interconversion of L-alanine and D-alanine. May also act on other amino acids.</text>
</comment>
<comment type="catalytic activity">
    <reaction evidence="1">
        <text>L-alanine = D-alanine</text>
        <dbReference type="Rhea" id="RHEA:20249"/>
        <dbReference type="ChEBI" id="CHEBI:57416"/>
        <dbReference type="ChEBI" id="CHEBI:57972"/>
        <dbReference type="EC" id="5.1.1.1"/>
    </reaction>
</comment>
<comment type="cofactor">
    <cofactor evidence="1">
        <name>pyridoxal 5'-phosphate</name>
        <dbReference type="ChEBI" id="CHEBI:597326"/>
    </cofactor>
</comment>
<comment type="pathway">
    <text evidence="1">Amino-acid biosynthesis; D-alanine biosynthesis; D-alanine from L-alanine: step 1/1.</text>
</comment>
<comment type="similarity">
    <text evidence="1">Belongs to the alanine racemase family.</text>
</comment>
<organism>
    <name type="scientific">Francisella tularensis subsp. novicida (strain U112)</name>
    <dbReference type="NCBI Taxonomy" id="401614"/>
    <lineage>
        <taxon>Bacteria</taxon>
        <taxon>Pseudomonadati</taxon>
        <taxon>Pseudomonadota</taxon>
        <taxon>Gammaproteobacteria</taxon>
        <taxon>Thiotrichales</taxon>
        <taxon>Francisellaceae</taxon>
        <taxon>Francisella</taxon>
    </lineage>
</organism>
<evidence type="ECO:0000255" key="1">
    <source>
        <dbReference type="HAMAP-Rule" id="MF_01201"/>
    </source>
</evidence>
<feature type="chain" id="PRO_1000138600" description="Alanine racemase">
    <location>
        <begin position="1"/>
        <end position="365"/>
    </location>
</feature>
<feature type="active site" description="Proton acceptor; specific for D-alanine" evidence="1">
    <location>
        <position position="32"/>
    </location>
</feature>
<feature type="active site" description="Proton acceptor; specific for L-alanine" evidence="1">
    <location>
        <position position="257"/>
    </location>
</feature>
<feature type="binding site" evidence="1">
    <location>
        <position position="128"/>
    </location>
    <ligand>
        <name>substrate</name>
    </ligand>
</feature>
<feature type="binding site" evidence="1">
    <location>
        <position position="305"/>
    </location>
    <ligand>
        <name>substrate</name>
    </ligand>
</feature>
<feature type="modified residue" description="N6-(pyridoxal phosphate)lysine" evidence="1">
    <location>
        <position position="32"/>
    </location>
</feature>